<protein>
    <recommendedName>
        <fullName>Histone acetyltransferase type B catalytic subunit</fullName>
        <ecNumber evidence="3">2.3.1.48</ecNumber>
    </recommendedName>
</protein>
<feature type="chain" id="PRO_0000227721" description="Histone acetyltransferase type B catalytic subunit">
    <location>
        <begin position="1"/>
        <end position="416"/>
    </location>
</feature>
<feature type="region of interest" description="Interaction with histone H4 N-terminus" evidence="3">
    <location>
        <begin position="52"/>
        <end position="54"/>
    </location>
</feature>
<feature type="region of interest" description="Interaction with histone H4 N-terminus" evidence="3">
    <location>
        <begin position="235"/>
        <end position="237"/>
    </location>
</feature>
<feature type="active site" description="Proton donor/acceptor" evidence="3">
    <location>
        <position position="286"/>
    </location>
</feature>
<feature type="binding site" evidence="3">
    <location>
        <begin position="251"/>
        <end position="253"/>
    </location>
    <ligand>
        <name>acetyl-CoA</name>
        <dbReference type="ChEBI" id="CHEBI:57288"/>
    </ligand>
</feature>
<feature type="binding site" evidence="3">
    <location>
        <begin position="258"/>
        <end position="264"/>
    </location>
    <ligand>
        <name>acetyl-CoA</name>
        <dbReference type="ChEBI" id="CHEBI:57288"/>
    </ligand>
</feature>
<feature type="site" description="Interaction with histone H4 N-terminus" evidence="2">
    <location>
        <position position="207"/>
    </location>
</feature>
<comment type="function">
    <text evidence="3">Catalytic component of the histone acetylase B (HAT-B) complex. Acetylates 'Lys-12' of histone H4 which is required for telomeric silencing. Has intrinsic substrate specificity that modifies lysine in recognition sequence GXGKXG. Involved in DNA double-strand break repair (By similarity).</text>
</comment>
<comment type="catalytic activity">
    <reaction evidence="3">
        <text>L-lysyl-[protein] + acetyl-CoA = N(6)-acetyl-L-lysyl-[protein] + CoA + H(+)</text>
        <dbReference type="Rhea" id="RHEA:45948"/>
        <dbReference type="Rhea" id="RHEA-COMP:9752"/>
        <dbReference type="Rhea" id="RHEA-COMP:10731"/>
        <dbReference type="ChEBI" id="CHEBI:15378"/>
        <dbReference type="ChEBI" id="CHEBI:29969"/>
        <dbReference type="ChEBI" id="CHEBI:57287"/>
        <dbReference type="ChEBI" id="CHEBI:57288"/>
        <dbReference type="ChEBI" id="CHEBI:61930"/>
        <dbReference type="EC" id="2.3.1.48"/>
    </reaction>
</comment>
<comment type="subunit">
    <text evidence="3">Component of the HAT-B complex composed of at least HAT1 and HAT2. The HAT-B complex binds to histone H4 tail (By similarity).</text>
</comment>
<comment type="subcellular location">
    <subcellularLocation>
        <location evidence="1">Cytoplasm</location>
    </subcellularLocation>
    <subcellularLocation>
        <location evidence="1">Nucleus</location>
    </subcellularLocation>
</comment>
<comment type="similarity">
    <text evidence="4">Belongs to the HAT1 family.</text>
</comment>
<dbReference type="EC" id="2.3.1.48" evidence="3"/>
<dbReference type="EMBL" id="AE017341">
    <property type="protein sequence ID" value="AAW41043.1"/>
    <property type="molecule type" value="Genomic_DNA"/>
</dbReference>
<dbReference type="RefSeq" id="XP_566862.1">
    <property type="nucleotide sequence ID" value="XM_566862.1"/>
</dbReference>
<dbReference type="SMR" id="P0CO06"/>
<dbReference type="FunCoup" id="P0CO06">
    <property type="interactions" value="689"/>
</dbReference>
<dbReference type="STRING" id="214684.P0CO06"/>
<dbReference type="PaxDb" id="214684-P0CO06"/>
<dbReference type="EnsemblFungi" id="AAW41043">
    <property type="protein sequence ID" value="AAW41043"/>
    <property type="gene ID" value="CNA05430"/>
</dbReference>
<dbReference type="GeneID" id="3253290"/>
<dbReference type="KEGG" id="cne:CNA05430"/>
<dbReference type="VEuPathDB" id="FungiDB:CNA05430"/>
<dbReference type="eggNOG" id="KOG2696">
    <property type="taxonomic scope" value="Eukaryota"/>
</dbReference>
<dbReference type="HOGENOM" id="CLU_036024_2_1_1"/>
<dbReference type="InParanoid" id="P0CO06"/>
<dbReference type="OMA" id="WTCDAND"/>
<dbReference type="OrthoDB" id="10253098at2759"/>
<dbReference type="Proteomes" id="UP000002149">
    <property type="component" value="Chromosome 1"/>
</dbReference>
<dbReference type="GO" id="GO:0000781">
    <property type="term" value="C:chromosome, telomeric region"/>
    <property type="evidence" value="ECO:0007669"/>
    <property type="project" value="GOC"/>
</dbReference>
<dbReference type="GO" id="GO:0005737">
    <property type="term" value="C:cytoplasm"/>
    <property type="evidence" value="ECO:0007669"/>
    <property type="project" value="UniProtKB-SubCell"/>
</dbReference>
<dbReference type="GO" id="GO:0005634">
    <property type="term" value="C:nucleus"/>
    <property type="evidence" value="ECO:0007669"/>
    <property type="project" value="UniProtKB-SubCell"/>
</dbReference>
<dbReference type="GO" id="GO:0042393">
    <property type="term" value="F:histone binding"/>
    <property type="evidence" value="ECO:0007669"/>
    <property type="project" value="InterPro"/>
</dbReference>
<dbReference type="GO" id="GO:0010485">
    <property type="term" value="F:histone H4 acetyltransferase activity"/>
    <property type="evidence" value="ECO:0000318"/>
    <property type="project" value="GO_Central"/>
</dbReference>
<dbReference type="GO" id="GO:0006281">
    <property type="term" value="P:DNA repair"/>
    <property type="evidence" value="ECO:0007669"/>
    <property type="project" value="UniProtKB-KW"/>
</dbReference>
<dbReference type="GO" id="GO:0031509">
    <property type="term" value="P:subtelomeric heterochromatin formation"/>
    <property type="evidence" value="ECO:0007669"/>
    <property type="project" value="InterPro"/>
</dbReference>
<dbReference type="CDD" id="cd04301">
    <property type="entry name" value="NAT_SF"/>
    <property type="match status" value="1"/>
</dbReference>
<dbReference type="FunFam" id="3.40.630.30:FF:000072">
    <property type="entry name" value="Histone acetyltransferase type B catalytic subunit"/>
    <property type="match status" value="1"/>
</dbReference>
<dbReference type="FunFam" id="3.90.360.10:FF:000006">
    <property type="entry name" value="Histone acetyltransferase type B catalytic subunit"/>
    <property type="match status" value="1"/>
</dbReference>
<dbReference type="Gene3D" id="1.10.10.390">
    <property type="match status" value="1"/>
</dbReference>
<dbReference type="Gene3D" id="3.40.630.30">
    <property type="match status" value="1"/>
</dbReference>
<dbReference type="Gene3D" id="3.90.360.10">
    <property type="entry name" value="Histone acetyl transferase 1 (HAT1), N-terminal domain"/>
    <property type="match status" value="1"/>
</dbReference>
<dbReference type="InterPro" id="IPR016181">
    <property type="entry name" value="Acyl_CoA_acyltransferase"/>
</dbReference>
<dbReference type="InterPro" id="IPR000182">
    <property type="entry name" value="GNAT_dom"/>
</dbReference>
<dbReference type="InterPro" id="IPR019467">
    <property type="entry name" value="Hat1_N"/>
</dbReference>
<dbReference type="InterPro" id="IPR037113">
    <property type="entry name" value="Hat1_N_sf"/>
</dbReference>
<dbReference type="InterPro" id="IPR017380">
    <property type="entry name" value="Hist_AcTrfase_B-typ_cat-su"/>
</dbReference>
<dbReference type="InterPro" id="IPR013523">
    <property type="entry name" value="Hist_AcTrfase_HAT1_C"/>
</dbReference>
<dbReference type="PANTHER" id="PTHR12046">
    <property type="entry name" value="HISTONE ACETYLTRANSFERASE TYPE B CATALYTIC SUBUNIT"/>
    <property type="match status" value="1"/>
</dbReference>
<dbReference type="Pfam" id="PF00583">
    <property type="entry name" value="Acetyltransf_1"/>
    <property type="match status" value="1"/>
</dbReference>
<dbReference type="Pfam" id="PF21184">
    <property type="entry name" value="HAT1_C_fung"/>
    <property type="match status" value="1"/>
</dbReference>
<dbReference type="Pfam" id="PF10394">
    <property type="entry name" value="Hat1_N"/>
    <property type="match status" value="1"/>
</dbReference>
<dbReference type="PIRSF" id="PIRSF038084">
    <property type="entry name" value="HAT-B_cat"/>
    <property type="match status" value="1"/>
</dbReference>
<dbReference type="SUPFAM" id="SSF55729">
    <property type="entry name" value="Acyl-CoA N-acyltransferases (Nat)"/>
    <property type="match status" value="1"/>
</dbReference>
<organism>
    <name type="scientific">Cryptococcus neoformans var. neoformans serotype D (strain JEC21 / ATCC MYA-565)</name>
    <name type="common">Filobasidiella neoformans</name>
    <dbReference type="NCBI Taxonomy" id="214684"/>
    <lineage>
        <taxon>Eukaryota</taxon>
        <taxon>Fungi</taxon>
        <taxon>Dikarya</taxon>
        <taxon>Basidiomycota</taxon>
        <taxon>Agaricomycotina</taxon>
        <taxon>Tremellomycetes</taxon>
        <taxon>Tremellales</taxon>
        <taxon>Cryptococcaceae</taxon>
        <taxon>Cryptococcus</taxon>
        <taxon>Cryptococcus neoformans species complex</taxon>
    </lineage>
</organism>
<evidence type="ECO:0000250" key="1"/>
<evidence type="ECO:0000250" key="2">
    <source>
        <dbReference type="UniProtKB" id="O14929"/>
    </source>
</evidence>
<evidence type="ECO:0000250" key="3">
    <source>
        <dbReference type="UniProtKB" id="Q12341"/>
    </source>
</evidence>
<evidence type="ECO:0000305" key="4"/>
<gene>
    <name type="primary">HAT1</name>
    <name type="ordered locus">CNA05430</name>
</gene>
<reference key="1">
    <citation type="journal article" date="2005" name="Science">
        <title>The genome of the basidiomycetous yeast and human pathogen Cryptococcus neoformans.</title>
        <authorList>
            <person name="Loftus B.J."/>
            <person name="Fung E."/>
            <person name="Roncaglia P."/>
            <person name="Rowley D."/>
            <person name="Amedeo P."/>
            <person name="Bruno D."/>
            <person name="Vamathevan J."/>
            <person name="Miranda M."/>
            <person name="Anderson I.J."/>
            <person name="Fraser J.A."/>
            <person name="Allen J.E."/>
            <person name="Bosdet I.E."/>
            <person name="Brent M.R."/>
            <person name="Chiu R."/>
            <person name="Doering T.L."/>
            <person name="Donlin M.J."/>
            <person name="D'Souza C.A."/>
            <person name="Fox D.S."/>
            <person name="Grinberg V."/>
            <person name="Fu J."/>
            <person name="Fukushima M."/>
            <person name="Haas B.J."/>
            <person name="Huang J.C."/>
            <person name="Janbon G."/>
            <person name="Jones S.J.M."/>
            <person name="Koo H.L."/>
            <person name="Krzywinski M.I."/>
            <person name="Kwon-Chung K.J."/>
            <person name="Lengeler K.B."/>
            <person name="Maiti R."/>
            <person name="Marra M.A."/>
            <person name="Marra R.E."/>
            <person name="Mathewson C.A."/>
            <person name="Mitchell T.G."/>
            <person name="Pertea M."/>
            <person name="Riggs F.R."/>
            <person name="Salzberg S.L."/>
            <person name="Schein J.E."/>
            <person name="Shvartsbeyn A."/>
            <person name="Shin H."/>
            <person name="Shumway M."/>
            <person name="Specht C.A."/>
            <person name="Suh B.B."/>
            <person name="Tenney A."/>
            <person name="Utterback T.R."/>
            <person name="Wickes B.L."/>
            <person name="Wortman J.R."/>
            <person name="Wye N.H."/>
            <person name="Kronstad J.W."/>
            <person name="Lodge J.K."/>
            <person name="Heitman J."/>
            <person name="Davis R.W."/>
            <person name="Fraser C.M."/>
            <person name="Hyman R.W."/>
        </authorList>
    </citation>
    <scope>NUCLEOTIDE SEQUENCE [LARGE SCALE GENOMIC DNA]</scope>
    <source>
        <strain>JEC21 / ATCC MYA-565</strain>
    </source>
</reference>
<keyword id="KW-0012">Acyltransferase</keyword>
<keyword id="KW-0156">Chromatin regulator</keyword>
<keyword id="KW-0963">Cytoplasm</keyword>
<keyword id="KW-0227">DNA damage</keyword>
<keyword id="KW-0234">DNA repair</keyword>
<keyword id="KW-0539">Nucleus</keyword>
<keyword id="KW-1185">Reference proteome</keyword>
<keyword id="KW-0808">Transferase</keyword>
<sequence>MAETLEEWISDSNQVLNLQMVRTPEDASLLQYEEQQNIDVFNPAFTYPIFGDNEKIFGYKGLDIKLHFASGSLRQYLDISYDAKLASSTTPPDEIEGALYKFIPPDYTKSEVEFQKRVAGDAETFKPLGEKIGSYAHPSAGRKGKGQGDSGMAAGKAIEDNEDVVEYEMYKATWSTPGFREYHRRMQIFVLLFIEGGSYVHEDEDAWEFIVLYERRTRPDSGIFTYHFVGYVSVYPFWCYPDRVRLRLSQFVILPPYQHQGHGSKLYNMLFRHMLDRSEVAELTIEDPAEAFEDLRDRNDLRFLVKEGIVKDPMLYVDVGKGKRGSRVEWELAIRRKYKIAQRQFDRLLEMLLFRQLDKGNPDKVKAYRLHVKARLYRFNYEMLSQMTVEERKEALAKTYESVVEDYKRILGMTFG</sequence>
<name>HAT1_CRYNJ</name>
<accession>P0CO06</accession>
<accession>Q55ZG3</accession>
<accession>Q5KNS9</accession>
<proteinExistence type="inferred from homology"/>